<reference evidence="12" key="1">
    <citation type="journal article" date="2002" name="Science">
        <title>The genome sequence of the malaria mosquito Anopheles gambiae.</title>
        <authorList>
            <person name="Holt R.A."/>
            <person name="Subramanian G.M."/>
            <person name="Halpern A."/>
            <person name="Sutton G.G."/>
            <person name="Charlab R."/>
            <person name="Nusskern D.R."/>
            <person name="Wincker P."/>
            <person name="Clark A.G."/>
            <person name="Ribeiro J.M.C."/>
            <person name="Wides R."/>
            <person name="Salzberg S.L."/>
            <person name="Loftus B.J."/>
            <person name="Yandell M.D."/>
            <person name="Majoros W.H."/>
            <person name="Rusch D.B."/>
            <person name="Lai Z."/>
            <person name="Kraft C.L."/>
            <person name="Abril J.F."/>
            <person name="Anthouard V."/>
            <person name="Arensburger P."/>
            <person name="Atkinson P.W."/>
            <person name="Baden H."/>
            <person name="de Berardinis V."/>
            <person name="Baldwin D."/>
            <person name="Benes V."/>
            <person name="Biedler J."/>
            <person name="Blass C."/>
            <person name="Bolanos R."/>
            <person name="Boscus D."/>
            <person name="Barnstead M."/>
            <person name="Cai S."/>
            <person name="Center A."/>
            <person name="Chaturverdi K."/>
            <person name="Christophides G.K."/>
            <person name="Chrystal M.A.M."/>
            <person name="Clamp M."/>
            <person name="Cravchik A."/>
            <person name="Curwen V."/>
            <person name="Dana A."/>
            <person name="Delcher A."/>
            <person name="Dew I."/>
            <person name="Evans C.A."/>
            <person name="Flanigan M."/>
            <person name="Grundschober-Freimoser A."/>
            <person name="Friedli L."/>
            <person name="Gu Z."/>
            <person name="Guan P."/>
            <person name="Guigo R."/>
            <person name="Hillenmeyer M.E."/>
            <person name="Hladun S.L."/>
            <person name="Hogan J.R."/>
            <person name="Hong Y.S."/>
            <person name="Hoover J."/>
            <person name="Jaillon O."/>
            <person name="Ke Z."/>
            <person name="Kodira C.D."/>
            <person name="Kokoza E."/>
            <person name="Koutsos A."/>
            <person name="Letunic I."/>
            <person name="Levitsky A.A."/>
            <person name="Liang Y."/>
            <person name="Lin J.-J."/>
            <person name="Lobo N.F."/>
            <person name="Lopez J.R."/>
            <person name="Malek J.A."/>
            <person name="McIntosh T.C."/>
            <person name="Meister S."/>
            <person name="Miller J.R."/>
            <person name="Mobarry C."/>
            <person name="Mongin E."/>
            <person name="Murphy S.D."/>
            <person name="O'Brochta D.A."/>
            <person name="Pfannkoch C."/>
            <person name="Qi R."/>
            <person name="Regier M.A."/>
            <person name="Remington K."/>
            <person name="Shao H."/>
            <person name="Sharakhova M.V."/>
            <person name="Sitter C.D."/>
            <person name="Shetty J."/>
            <person name="Smith T.J."/>
            <person name="Strong R."/>
            <person name="Sun J."/>
            <person name="Thomasova D."/>
            <person name="Ton L.Q."/>
            <person name="Topalis P."/>
            <person name="Tu Z.J."/>
            <person name="Unger M.F."/>
            <person name="Walenz B."/>
            <person name="Wang A.H."/>
            <person name="Wang J."/>
            <person name="Wang M."/>
            <person name="Wang X."/>
            <person name="Woodford K.J."/>
            <person name="Wortman J.R."/>
            <person name="Wu M."/>
            <person name="Yao A."/>
            <person name="Zdobnov E.M."/>
            <person name="Zhang H."/>
            <person name="Zhao Q."/>
            <person name="Zhao S."/>
            <person name="Zhu S.C."/>
            <person name="Zhimulev I."/>
            <person name="Coluzzi M."/>
            <person name="della Torre A."/>
            <person name="Roth C.W."/>
            <person name="Louis C."/>
            <person name="Kalush F."/>
            <person name="Mural R.J."/>
            <person name="Myers E.W."/>
            <person name="Adams M.D."/>
            <person name="Smith H.O."/>
            <person name="Broder S."/>
            <person name="Gardner M.J."/>
            <person name="Fraser C.M."/>
            <person name="Birney E."/>
            <person name="Bork P."/>
            <person name="Brey P.T."/>
            <person name="Venter J.C."/>
            <person name="Weissenbach J."/>
            <person name="Kafatos F.C."/>
            <person name="Collins F.H."/>
            <person name="Hoffman S.L."/>
        </authorList>
    </citation>
    <scope>NUCLEOTIDE SEQUENCE [LARGE SCALE GENOMIC DNA]</scope>
    <source>
        <strain evidence="12">PEST</strain>
    </source>
</reference>
<reference evidence="11" key="2">
    <citation type="journal article" date="2007" name="Genome Biol.">
        <title>Update of the Anopheles gambiae PEST genome assembly.</title>
        <authorList>
            <person name="Sharakhova M.V."/>
            <person name="Hammond M.P."/>
            <person name="Lobo N.F."/>
            <person name="Krzywinski J."/>
            <person name="Unger M.F."/>
            <person name="Hillenmeyer M.E."/>
            <person name="Bruggner R.V."/>
            <person name="Birney E."/>
            <person name="Collins F.H."/>
        </authorList>
    </citation>
    <scope>NUCLEOTIDE SEQUENCE [LARGE SCALE GENOMIC DNA]</scope>
    <source>
        <strain evidence="11">PEST</strain>
    </source>
</reference>
<reference evidence="10" key="3">
    <citation type="journal article" date="2014" name="PLoS Pathog.">
        <title>Plasmodium falciparum infection induces expression of a mosquito salivary protein (Agaphelin) that targets neutrophil function and inhibits thrombosis without impairing hemostasis.</title>
        <authorList>
            <person name="Waisberg M."/>
            <person name="Molina-Cruz A."/>
            <person name="Mizurini D.M."/>
            <person name="Gera N."/>
            <person name="Sousa B.C."/>
            <person name="Ma D."/>
            <person name="Leal A.C."/>
            <person name="Gomes T."/>
            <person name="Kotsyfakis M."/>
            <person name="Ribeiro J.M."/>
            <person name="Lukszo J."/>
            <person name="Reiter K."/>
            <person name="Porcella S.F."/>
            <person name="Oliveira C.J."/>
            <person name="Monteiro R.Q."/>
            <person name="Barillas-Mury C."/>
            <person name="Pierce S.K."/>
            <person name="Francischetti I.M."/>
        </authorList>
    </citation>
    <scope>FUNCTION</scope>
    <scope>INTERACTION WITH HOST ELANE</scope>
    <scope>INDUCTION (MICROBIAL INFECTION)</scope>
</reference>
<reference key="4">
    <citation type="journal article" date="2020" name="Immunobiology">
        <title>Agaphelin modulates the activation of human bronchial epithelial cells induced by lipopolysaccharide and IL-4.</title>
        <authorList>
            <person name="Favarin D.C."/>
            <person name="Pereira A.B.M."/>
            <person name="Francischetti I.M.B."/>
            <person name="da Silva M.V."/>
            <person name="Rodrigues V. Jr."/>
            <person name="da Silva P.R."/>
            <person name="Valenzuela J.G."/>
            <person name="Teixeira D.N.S."/>
            <person name="Oliveira C.J.F."/>
            <person name="Rogerio A.P."/>
        </authorList>
    </citation>
    <scope>FUNCTION</scope>
</reference>
<reference key="5">
    <citation type="journal article" date="2021" name="Brain Behav. Immun.">
        <title>Elastase inhibitor agaphelin protects from acute ischemic stroke in mice by reducing thrombosis, blood-brain barrier damage, and inflammation.</title>
        <authorList>
            <person name="Leinweber J."/>
            <person name="Mizurini D.M."/>
            <person name="Francischetti I.M.B."/>
            <person name="Fleischer M."/>
            <person name="Hermann D.M."/>
            <person name="Kleinschnitz C."/>
            <person name="Langhauser F."/>
        </authorList>
    </citation>
    <scope>FUNCTION</scope>
</reference>
<accession>Q7Q3J5</accession>
<dbReference type="EMBL" id="AAAB01008964">
    <property type="protein sequence ID" value="EAA12792.3"/>
    <property type="molecule type" value="Genomic_DNA"/>
</dbReference>
<dbReference type="RefSeq" id="XP_317576.3">
    <property type="nucleotide sequence ID" value="XM_317576.3"/>
</dbReference>
<dbReference type="SMR" id="Q7Q3J5"/>
<dbReference type="FunCoup" id="Q7Q3J5">
    <property type="interactions" value="7"/>
</dbReference>
<dbReference type="PaxDb" id="7165-AGAP007907-PA"/>
<dbReference type="EnsemblMetazoa" id="AGAP007907-RA">
    <property type="protein sequence ID" value="AGAP007907-PA"/>
    <property type="gene ID" value="AGAP007907"/>
</dbReference>
<dbReference type="KEGG" id="aga:1278048"/>
<dbReference type="VEuPathDB" id="VectorBase:AGAMI1_010584"/>
<dbReference type="VEuPathDB" id="VectorBase:AGAP007907"/>
<dbReference type="eggNOG" id="ENOG502T6W0">
    <property type="taxonomic scope" value="Eukaryota"/>
</dbReference>
<dbReference type="HOGENOM" id="CLU_169765_5_0_1"/>
<dbReference type="OMA" id="EMASCAC"/>
<dbReference type="Proteomes" id="UP000007062">
    <property type="component" value="Chromosome 3R"/>
</dbReference>
<dbReference type="GO" id="GO:0005576">
    <property type="term" value="C:extracellular region"/>
    <property type="evidence" value="ECO:0007669"/>
    <property type="project" value="UniProtKB-SubCell"/>
</dbReference>
<dbReference type="GO" id="GO:0030414">
    <property type="term" value="F:peptidase inhibitor activity"/>
    <property type="evidence" value="ECO:0000314"/>
    <property type="project" value="UniProtKB"/>
</dbReference>
<dbReference type="GO" id="GO:0004867">
    <property type="term" value="F:serine-type endopeptidase inhibitor activity"/>
    <property type="evidence" value="ECO:0007669"/>
    <property type="project" value="UniProtKB-KW"/>
</dbReference>
<dbReference type="GO" id="GO:0090729">
    <property type="term" value="F:toxin activity"/>
    <property type="evidence" value="ECO:0007669"/>
    <property type="project" value="UniProtKB-KW"/>
</dbReference>
<dbReference type="GO" id="GO:0035899">
    <property type="term" value="P:suppression of blood coagulation in another organism"/>
    <property type="evidence" value="ECO:0000314"/>
    <property type="project" value="UniProtKB"/>
</dbReference>
<dbReference type="CDD" id="cd00104">
    <property type="entry name" value="KAZAL_FS"/>
    <property type="match status" value="1"/>
</dbReference>
<dbReference type="Gene3D" id="3.30.60.30">
    <property type="match status" value="1"/>
</dbReference>
<dbReference type="InterPro" id="IPR002350">
    <property type="entry name" value="Kazal_dom"/>
</dbReference>
<dbReference type="InterPro" id="IPR036058">
    <property type="entry name" value="Kazal_dom_sf"/>
</dbReference>
<dbReference type="InterPro" id="IPR053265">
    <property type="entry name" value="Serpin"/>
</dbReference>
<dbReference type="PANTHER" id="PTHR21131:SF0">
    <property type="entry name" value="GEO10195P1-RELATED"/>
    <property type="match status" value="1"/>
</dbReference>
<dbReference type="PANTHER" id="PTHR21131">
    <property type="entry name" value="SERINE-TYPE ENDOPEPTIDASE INHIBITOR"/>
    <property type="match status" value="1"/>
</dbReference>
<dbReference type="Pfam" id="PF00050">
    <property type="entry name" value="Kazal_1"/>
    <property type="match status" value="1"/>
</dbReference>
<dbReference type="SMART" id="SM00280">
    <property type="entry name" value="KAZAL"/>
    <property type="match status" value="1"/>
</dbReference>
<dbReference type="SUPFAM" id="SSF100895">
    <property type="entry name" value="Kazal-type serine protease inhibitors"/>
    <property type="match status" value="1"/>
</dbReference>
<dbReference type="PROSITE" id="PS00282">
    <property type="entry name" value="KAZAL_1"/>
    <property type="match status" value="1"/>
</dbReference>
<dbReference type="PROSITE" id="PS51465">
    <property type="entry name" value="KAZAL_2"/>
    <property type="match status" value="1"/>
</dbReference>
<name>AGA_ANOGA</name>
<proteinExistence type="evidence at protein level"/>
<evidence type="ECO:0000255" key="1"/>
<evidence type="ECO:0000255" key="2">
    <source>
        <dbReference type="PROSITE-ProRule" id="PRU00498"/>
    </source>
</evidence>
<evidence type="ECO:0000255" key="3">
    <source>
        <dbReference type="PROSITE-ProRule" id="PRU00798"/>
    </source>
</evidence>
<evidence type="ECO:0000269" key="4">
    <source>
    </source>
</evidence>
<evidence type="ECO:0000269" key="5">
    <source>
    </source>
</evidence>
<evidence type="ECO:0000269" key="6">
    <source>
    </source>
</evidence>
<evidence type="ECO:0000303" key="7">
    <source>
    </source>
</evidence>
<evidence type="ECO:0000303" key="8">
    <source>
    </source>
</evidence>
<evidence type="ECO:0000303" key="9">
    <source>
    </source>
</evidence>
<evidence type="ECO:0000305" key="10"/>
<evidence type="ECO:0000312" key="11">
    <source>
        <dbReference type="EMBL" id="EAA12792.3"/>
    </source>
</evidence>
<evidence type="ECO:0000312" key="12">
    <source>
        <dbReference type="Proteomes" id="UP000007062"/>
    </source>
</evidence>
<sequence length="84" mass="9059">MKMRVHLLAVSVLLVVLALQTTPAEADINSEMATCACQLIYRPVCASNNESYSNECVLKCASETPTGRSIGLHKVKDGNCNGEF</sequence>
<comment type="function">
    <text evidence="4 5 6">Functions as a slow and tight inhibitor of host neutrophil elastase (ELANE) (PubMed:25211214). Inhibits host proteinase 3 (PRTN3) and chymotrypsin (PubMed:25211214). Does not inhibit other host proteases involved in coagulation or inflammation, such as cathepsin G (CTSG), trypsin, chymase, matriptase, beta-tryptase, kallikrein, urokinase-type plasminogen activator (PLAU), coagulation factors Xa (F10), XIa (F11), XIIa (F12), plasmin (PLG), thrombin (F2) and tissue-type plasminogen activator (PLAT) (PubMed:25211214). Inhibits host neutrophil chemotaxis induced by N-formylmethionine-leucyl-phenylalanine (fMLP) in vitro (PubMed:25211214). Inhibits ELANE-mediated potentiation of platelet aggregation induced by CTSG in the host (PubMed:25211214). Does not affect CTSG- or collagen-induced platelet aggregation (PubMed:25211214). Blocks cleavage of tissue factor pathway inhibitor (TFPI) by ELANE in the host (PubMed:25211214). Inhibits neutrophil-induced coagulation in the host by interfering with neutrophil extracellular traps (NET) formation (PubMed:25211214). Exhibits anti-inflammatory activity (PubMed:32201094, PubMed:33401017). Reduces ischemia-induced activation of MAPK and NF-kappa-B pathways in the host (PubMed:33401017). Decreases CCL2 and IL8 production in IL4- or lipopolysaccharide (LPS)-stimulated host epithelial cells (PubMed:32201094). Reduces caspase-3 (CASP3)-dependent apoptosis in damaged host tissues (PubMed:33401017).</text>
</comment>
<comment type="subunit">
    <text evidence="4">Interacts with human ELANE.</text>
</comment>
<comment type="subcellular location">
    <subcellularLocation>
        <location evidence="10">Secreted</location>
    </subcellularLocation>
</comment>
<comment type="induction">
    <text evidence="4">(Microbial infection) Up-regulated in salivary gland following infection with Plasmodium falciparum.</text>
</comment>
<comment type="miscellaneous">
    <text evidence="4 6">Reduces inflammation and neutrophil accumulation in a mouse model of acute inflammation (PubMed:25211214). Prevents thrombus formation in FeCl(3)-induced carotid artery thrombosis model in mice without impairing hemostasis (PubMed:25211214). Protects mice from experimental ischemic stroke by reducing local thrombus formation, blood-brain barrier damage and inflammatory responses in brain (PubMed:33401017).</text>
</comment>
<organism evidence="11">
    <name type="scientific">Anopheles gambiae</name>
    <name type="common">African malaria mosquito</name>
    <dbReference type="NCBI Taxonomy" id="7165"/>
    <lineage>
        <taxon>Eukaryota</taxon>
        <taxon>Metazoa</taxon>
        <taxon>Ecdysozoa</taxon>
        <taxon>Arthropoda</taxon>
        <taxon>Hexapoda</taxon>
        <taxon>Insecta</taxon>
        <taxon>Pterygota</taxon>
        <taxon>Neoptera</taxon>
        <taxon>Endopterygota</taxon>
        <taxon>Diptera</taxon>
        <taxon>Nematocera</taxon>
        <taxon>Culicoidea</taxon>
        <taxon>Culicidae</taxon>
        <taxon>Anophelinae</taxon>
        <taxon>Anopheles</taxon>
    </lineage>
</organism>
<keyword id="KW-1203">Blood coagulation cascade inhibiting toxin</keyword>
<keyword id="KW-1015">Disulfide bond</keyword>
<keyword id="KW-0325">Glycoprotein</keyword>
<keyword id="KW-1199">Hemostasis impairing toxin</keyword>
<keyword id="KW-1201">Platelet aggregation inhibiting toxin</keyword>
<keyword id="KW-0646">Protease inhibitor</keyword>
<keyword id="KW-1185">Reference proteome</keyword>
<keyword id="KW-0964">Secreted</keyword>
<keyword id="KW-0722">Serine protease inhibitor</keyword>
<keyword id="KW-0732">Signal</keyword>
<keyword id="KW-0800">Toxin</keyword>
<protein>
    <recommendedName>
        <fullName evidence="7 8 9">Agaphelin</fullName>
    </recommendedName>
</protein>
<gene>
    <name evidence="11" type="ORF">AgaP_AGAP007907</name>
</gene>
<feature type="signal peptide" evidence="1">
    <location>
        <begin position="1"/>
        <end position="26"/>
    </location>
</feature>
<feature type="chain" id="PRO_5014588100" description="Agaphelin" evidence="1">
    <location>
        <begin position="27"/>
        <end position="84"/>
    </location>
</feature>
<feature type="domain" description="Kazal-like" evidence="3">
    <location>
        <begin position="29"/>
        <end position="82"/>
    </location>
</feature>
<feature type="site" description="Reactive bond" evidence="3">
    <location>
        <begin position="39"/>
        <end position="40"/>
    </location>
</feature>
<feature type="glycosylation site" description="N-linked (GlcNAc...) asparagine" evidence="2">
    <location>
        <position position="49"/>
    </location>
</feature>
<feature type="disulfide bond" evidence="3">
    <location>
        <begin position="35"/>
        <end position="60"/>
    </location>
</feature>
<feature type="disulfide bond" evidence="3">
    <location>
        <begin position="37"/>
        <end position="56"/>
    </location>
</feature>
<feature type="disulfide bond" evidence="3">
    <location>
        <begin position="45"/>
        <end position="80"/>
    </location>
</feature>